<keyword id="KW-0106">Calcium</keyword>
<keyword id="KW-0143">Chaperone</keyword>
<keyword id="KW-0256">Endoplasmic reticulum</keyword>
<keyword id="KW-0325">Glycoprotein</keyword>
<keyword id="KW-0479">Metal-binding</keyword>
<keyword id="KW-0653">Protein transport</keyword>
<keyword id="KW-1267">Proteomics identification</keyword>
<keyword id="KW-1185">Reference proteome</keyword>
<keyword id="KW-0677">Repeat</keyword>
<keyword id="KW-0732">Signal</keyword>
<keyword id="KW-0813">Transport</keyword>
<evidence type="ECO:0000250" key="1">
    <source>
        <dbReference type="UniProtKB" id="I6L9G5"/>
    </source>
</evidence>
<evidence type="ECO:0000250" key="2">
    <source>
        <dbReference type="UniProtKB" id="Q8BH97"/>
    </source>
</evidence>
<evidence type="ECO:0000255" key="3"/>
<evidence type="ECO:0000255" key="4">
    <source>
        <dbReference type="PROSITE-ProRule" id="PRU00448"/>
    </source>
</evidence>
<evidence type="ECO:0000255" key="5">
    <source>
        <dbReference type="PROSITE-ProRule" id="PRU10138"/>
    </source>
</evidence>
<evidence type="ECO:0000256" key="6">
    <source>
        <dbReference type="SAM" id="MobiDB-lite"/>
    </source>
</evidence>
<evidence type="ECO:0000269" key="7">
    <source>
    </source>
</evidence>
<evidence type="ECO:0000269" key="8">
    <source>
    </source>
</evidence>
<evidence type="ECO:0000269" key="9">
    <source>
    </source>
</evidence>
<evidence type="ECO:0000305" key="10"/>
<evidence type="ECO:0000312" key="11">
    <source>
        <dbReference type="EMBL" id="AAQ88789.1"/>
    </source>
</evidence>
<evidence type="ECO:0000312" key="12">
    <source>
        <dbReference type="HGNC" id="HGNC:21145"/>
    </source>
</evidence>
<feature type="signal peptide" evidence="3">
    <location>
        <begin position="1"/>
        <end position="20"/>
    </location>
</feature>
<feature type="chain" id="PRO_0000004151" description="Reticulocalbin-3">
    <location>
        <begin position="21"/>
        <end position="328"/>
    </location>
</feature>
<feature type="domain" description="EF-hand 1" evidence="4">
    <location>
        <begin position="75"/>
        <end position="112"/>
    </location>
</feature>
<feature type="domain" description="EF-hand 2" evidence="4">
    <location>
        <begin position="113"/>
        <end position="148"/>
    </location>
</feature>
<feature type="domain" description="EF-hand 3" evidence="4">
    <location>
        <begin position="163"/>
        <end position="198"/>
    </location>
</feature>
<feature type="domain" description="EF-hand 4" evidence="4">
    <location>
        <begin position="200"/>
        <end position="235"/>
    </location>
</feature>
<feature type="domain" description="EF-hand 5" evidence="4">
    <location>
        <begin position="241"/>
        <end position="276"/>
    </location>
</feature>
<feature type="domain" description="EF-hand 6" evidence="4">
    <location>
        <begin position="277"/>
        <end position="312"/>
    </location>
</feature>
<feature type="region of interest" description="Disordered" evidence="6">
    <location>
        <begin position="19"/>
        <end position="49"/>
    </location>
</feature>
<feature type="short sequence motif" description="Prevents secretion from ER" evidence="5">
    <location>
        <begin position="325"/>
        <end position="328"/>
    </location>
</feature>
<feature type="binding site" evidence="10">
    <location>
        <position position="92"/>
    </location>
    <ligand>
        <name>Ca(2+)</name>
        <dbReference type="ChEBI" id="CHEBI:29108"/>
        <label>1</label>
    </ligand>
</feature>
<feature type="binding site" evidence="10">
    <location>
        <position position="94"/>
    </location>
    <ligand>
        <name>Ca(2+)</name>
        <dbReference type="ChEBI" id="CHEBI:29108"/>
        <label>1</label>
    </ligand>
</feature>
<feature type="binding site" evidence="10">
    <location>
        <position position="96"/>
    </location>
    <ligand>
        <name>Ca(2+)</name>
        <dbReference type="ChEBI" id="CHEBI:29108"/>
        <label>1</label>
    </ligand>
</feature>
<feature type="binding site" evidence="10">
    <location>
        <position position="101"/>
    </location>
    <ligand>
        <name>Ca(2+)</name>
        <dbReference type="ChEBI" id="CHEBI:29108"/>
        <label>1</label>
    </ligand>
</feature>
<feature type="binding site" evidence="4">
    <location>
        <position position="126"/>
    </location>
    <ligand>
        <name>Ca(2+)</name>
        <dbReference type="ChEBI" id="CHEBI:29108"/>
        <label>2</label>
    </ligand>
</feature>
<feature type="binding site" evidence="4">
    <location>
        <position position="128"/>
    </location>
    <ligand>
        <name>Ca(2+)</name>
        <dbReference type="ChEBI" id="CHEBI:29108"/>
        <label>2</label>
    </ligand>
</feature>
<feature type="binding site" evidence="4">
    <location>
        <position position="130"/>
    </location>
    <ligand>
        <name>Ca(2+)</name>
        <dbReference type="ChEBI" id="CHEBI:29108"/>
        <label>2</label>
    </ligand>
</feature>
<feature type="binding site" evidence="4">
    <location>
        <position position="132"/>
    </location>
    <ligand>
        <name>Ca(2+)</name>
        <dbReference type="ChEBI" id="CHEBI:29108"/>
        <label>2</label>
    </ligand>
</feature>
<feature type="binding site" evidence="4">
    <location>
        <position position="137"/>
    </location>
    <ligand>
        <name>Ca(2+)</name>
        <dbReference type="ChEBI" id="CHEBI:29108"/>
        <label>2</label>
    </ligand>
</feature>
<feature type="binding site" evidence="10">
    <location>
        <position position="176"/>
    </location>
    <ligand>
        <name>Ca(2+)</name>
        <dbReference type="ChEBI" id="CHEBI:29108"/>
        <label>3</label>
    </ligand>
</feature>
<feature type="binding site" evidence="10">
    <location>
        <position position="178"/>
    </location>
    <ligand>
        <name>Ca(2+)</name>
        <dbReference type="ChEBI" id="CHEBI:29108"/>
        <label>3</label>
    </ligand>
</feature>
<feature type="binding site" evidence="10">
    <location>
        <position position="180"/>
    </location>
    <ligand>
        <name>Ca(2+)</name>
        <dbReference type="ChEBI" id="CHEBI:29108"/>
        <label>3</label>
    </ligand>
</feature>
<feature type="binding site" evidence="10">
    <location>
        <position position="182"/>
    </location>
    <ligand>
        <name>Ca(2+)</name>
        <dbReference type="ChEBI" id="CHEBI:29108"/>
        <label>3</label>
    </ligand>
</feature>
<feature type="binding site" evidence="10">
    <location>
        <position position="187"/>
    </location>
    <ligand>
        <name>Ca(2+)</name>
        <dbReference type="ChEBI" id="CHEBI:29108"/>
        <label>3</label>
    </ligand>
</feature>
<feature type="binding site" evidence="4">
    <location>
        <position position="213"/>
    </location>
    <ligand>
        <name>Ca(2+)</name>
        <dbReference type="ChEBI" id="CHEBI:29108"/>
        <label>4</label>
    </ligand>
</feature>
<feature type="binding site" evidence="4">
    <location>
        <position position="215"/>
    </location>
    <ligand>
        <name>Ca(2+)</name>
        <dbReference type="ChEBI" id="CHEBI:29108"/>
        <label>4</label>
    </ligand>
</feature>
<feature type="binding site" evidence="4">
    <location>
        <position position="217"/>
    </location>
    <ligand>
        <name>Ca(2+)</name>
        <dbReference type="ChEBI" id="CHEBI:29108"/>
        <label>4</label>
    </ligand>
</feature>
<feature type="binding site" evidence="4">
    <location>
        <position position="219"/>
    </location>
    <ligand>
        <name>Ca(2+)</name>
        <dbReference type="ChEBI" id="CHEBI:29108"/>
        <label>4</label>
    </ligand>
</feature>
<feature type="binding site" evidence="4">
    <location>
        <position position="224"/>
    </location>
    <ligand>
        <name>Ca(2+)</name>
        <dbReference type="ChEBI" id="CHEBI:29108"/>
        <label>4</label>
    </ligand>
</feature>
<feature type="binding site" evidence="4">
    <location>
        <position position="254"/>
    </location>
    <ligand>
        <name>Ca(2+)</name>
        <dbReference type="ChEBI" id="CHEBI:29108"/>
        <label>5</label>
    </ligand>
</feature>
<feature type="binding site" evidence="4">
    <location>
        <position position="256"/>
    </location>
    <ligand>
        <name>Ca(2+)</name>
        <dbReference type="ChEBI" id="CHEBI:29108"/>
        <label>5</label>
    </ligand>
</feature>
<feature type="binding site" evidence="4">
    <location>
        <position position="258"/>
    </location>
    <ligand>
        <name>Ca(2+)</name>
        <dbReference type="ChEBI" id="CHEBI:29108"/>
        <label>5</label>
    </ligand>
</feature>
<feature type="binding site" evidence="4">
    <location>
        <position position="260"/>
    </location>
    <ligand>
        <name>Ca(2+)</name>
        <dbReference type="ChEBI" id="CHEBI:29108"/>
        <label>5</label>
    </ligand>
</feature>
<feature type="binding site" evidence="4">
    <location>
        <position position="265"/>
    </location>
    <ligand>
        <name>Ca(2+)</name>
        <dbReference type="ChEBI" id="CHEBI:29108"/>
        <label>5</label>
    </ligand>
</feature>
<feature type="binding site" evidence="4">
    <location>
        <position position="290"/>
    </location>
    <ligand>
        <name>Ca(2+)</name>
        <dbReference type="ChEBI" id="CHEBI:29108"/>
        <label>6</label>
    </ligand>
</feature>
<feature type="binding site" evidence="4">
    <location>
        <position position="292"/>
    </location>
    <ligand>
        <name>Ca(2+)</name>
        <dbReference type="ChEBI" id="CHEBI:29108"/>
        <label>6</label>
    </ligand>
</feature>
<feature type="binding site" evidence="4">
    <location>
        <position position="294"/>
    </location>
    <ligand>
        <name>Ca(2+)</name>
        <dbReference type="ChEBI" id="CHEBI:29108"/>
        <label>6</label>
    </ligand>
</feature>
<feature type="binding site" evidence="4">
    <location>
        <position position="296"/>
    </location>
    <ligand>
        <name>Ca(2+)</name>
        <dbReference type="ChEBI" id="CHEBI:29108"/>
        <label>6</label>
    </ligand>
</feature>
<feature type="binding site" evidence="4">
    <location>
        <position position="301"/>
    </location>
    <ligand>
        <name>Ca(2+)</name>
        <dbReference type="ChEBI" id="CHEBI:29108"/>
        <label>6</label>
    </ligand>
</feature>
<feature type="glycosylation site" description="N-linked (GlcNAc...) asparagine" evidence="8">
    <location>
        <position position="140"/>
    </location>
</feature>
<feature type="sequence variant" id="VAR_033696" description="In dbSNP:rs34654230.">
    <original>R</original>
    <variation>W</variation>
    <location>
        <position position="250"/>
    </location>
</feature>
<feature type="mutagenesis site" description="Decreased function in PCSK6 maturation and/or secretion." evidence="7">
    <original>R</original>
    <variation>K</variation>
    <location>
        <position position="86"/>
    </location>
</feature>
<feature type="mutagenesis site" description="Decreased function in PCSK6 maturation and/or secretion." evidence="7">
    <original>R</original>
    <variation>K</variation>
    <location>
        <position position="112"/>
    </location>
</feature>
<feature type="mutagenesis site" description="Decreased function in PCSK6 maturation and/or secretion." evidence="7">
    <location>
        <begin position="325"/>
        <end position="328"/>
    </location>
</feature>
<feature type="sequence conflict" description="In Ref. 2; AAG09692." evidence="10" ref="2">
    <original>R</original>
    <variation>G</variation>
    <location>
        <position position="82"/>
    </location>
</feature>
<feature type="sequence conflict" description="In Ref. 2; AAG09692." evidence="10" ref="2">
    <original>G</original>
    <variation>S</variation>
    <location>
        <position position="93"/>
    </location>
</feature>
<protein>
    <recommendedName>
        <fullName evidence="10">Reticulocalbin-3</fullName>
    </recommendedName>
    <alternativeName>
        <fullName>EF-hand calcium-binding protein RLP49</fullName>
    </alternativeName>
</protein>
<dbReference type="EMBL" id="AY195859">
    <property type="protein sequence ID" value="AAO43054.1"/>
    <property type="molecule type" value="mRNA"/>
</dbReference>
<dbReference type="EMBL" id="AF183423">
    <property type="protein sequence ID" value="AAG09692.1"/>
    <property type="molecule type" value="mRNA"/>
</dbReference>
<dbReference type="EMBL" id="AY358423">
    <property type="protein sequence ID" value="AAQ88789.1"/>
    <property type="molecule type" value="mRNA"/>
</dbReference>
<dbReference type="EMBL" id="BC013436">
    <property type="protein sequence ID" value="AAH13436.1"/>
    <property type="molecule type" value="mRNA"/>
</dbReference>
<dbReference type="CCDS" id="CCDS12771.1"/>
<dbReference type="RefSeq" id="NP_065701.2">
    <property type="nucleotide sequence ID" value="NM_020650.2"/>
</dbReference>
<dbReference type="RefSeq" id="XP_011525445.1">
    <property type="nucleotide sequence ID" value="XM_011527143.1"/>
</dbReference>
<dbReference type="RefSeq" id="XP_016882512.1">
    <property type="nucleotide sequence ID" value="XM_017027023.1"/>
</dbReference>
<dbReference type="RefSeq" id="XP_047295073.1">
    <property type="nucleotide sequence ID" value="XM_047439117.1"/>
</dbReference>
<dbReference type="RefSeq" id="XP_047295074.1">
    <property type="nucleotide sequence ID" value="XM_047439118.1"/>
</dbReference>
<dbReference type="RefSeq" id="XP_054177495.1">
    <property type="nucleotide sequence ID" value="XM_054321520.1"/>
</dbReference>
<dbReference type="BioGRID" id="121488">
    <property type="interactions" value="23"/>
</dbReference>
<dbReference type="FunCoup" id="Q96D15">
    <property type="interactions" value="372"/>
</dbReference>
<dbReference type="IntAct" id="Q96D15">
    <property type="interactions" value="16"/>
</dbReference>
<dbReference type="MINT" id="Q96D15"/>
<dbReference type="STRING" id="9606.ENSP00000270645"/>
<dbReference type="GlyConnect" id="1713">
    <property type="glycosylation" value="10 N-Linked glycans (1 site)"/>
</dbReference>
<dbReference type="GlyCosmos" id="Q96D15">
    <property type="glycosylation" value="2 sites, 11 glycans"/>
</dbReference>
<dbReference type="GlyGen" id="Q96D15">
    <property type="glycosylation" value="2 sites, 22 N-linked glycans (1 site), 1 O-linked glycan (1 site)"/>
</dbReference>
<dbReference type="iPTMnet" id="Q96D15"/>
<dbReference type="MetOSite" id="Q96D15"/>
<dbReference type="PhosphoSitePlus" id="Q96D15"/>
<dbReference type="BioMuta" id="RCN3"/>
<dbReference type="DMDM" id="30316268"/>
<dbReference type="jPOST" id="Q96D15"/>
<dbReference type="MassIVE" id="Q96D15"/>
<dbReference type="PaxDb" id="9606-ENSP00000270645"/>
<dbReference type="PeptideAtlas" id="Q96D15"/>
<dbReference type="ProteomicsDB" id="76245"/>
<dbReference type="Pumba" id="Q96D15"/>
<dbReference type="Antibodypedia" id="53458">
    <property type="antibodies" value="101 antibodies from 20 providers"/>
</dbReference>
<dbReference type="DNASU" id="57333"/>
<dbReference type="Ensembl" id="ENST00000270645.8">
    <property type="protein sequence ID" value="ENSP00000270645.2"/>
    <property type="gene ID" value="ENSG00000142552.8"/>
</dbReference>
<dbReference type="GeneID" id="57333"/>
<dbReference type="KEGG" id="hsa:57333"/>
<dbReference type="MANE-Select" id="ENST00000270645.8">
    <property type="protein sequence ID" value="ENSP00000270645.2"/>
    <property type="RefSeq nucleotide sequence ID" value="NM_020650.3"/>
    <property type="RefSeq protein sequence ID" value="NP_065701.2"/>
</dbReference>
<dbReference type="UCSC" id="uc002poj.4">
    <property type="organism name" value="human"/>
</dbReference>
<dbReference type="AGR" id="HGNC:21145"/>
<dbReference type="CTD" id="57333"/>
<dbReference type="DisGeNET" id="57333"/>
<dbReference type="GeneCards" id="RCN3"/>
<dbReference type="HGNC" id="HGNC:21145">
    <property type="gene designation" value="RCN3"/>
</dbReference>
<dbReference type="HPA" id="ENSG00000142552">
    <property type="expression patterns" value="Low tissue specificity"/>
</dbReference>
<dbReference type="MIM" id="619032">
    <property type="type" value="gene"/>
</dbReference>
<dbReference type="neXtProt" id="NX_Q96D15"/>
<dbReference type="OpenTargets" id="ENSG00000142552"/>
<dbReference type="PharmGKB" id="PA134880380"/>
<dbReference type="VEuPathDB" id="HostDB:ENSG00000142552"/>
<dbReference type="eggNOG" id="KOG4223">
    <property type="taxonomic scope" value="Eukaryota"/>
</dbReference>
<dbReference type="GeneTree" id="ENSGT01010000222360"/>
<dbReference type="HOGENOM" id="CLU_044718_0_1_1"/>
<dbReference type="InParanoid" id="Q96D15"/>
<dbReference type="OMA" id="MPMKYAD"/>
<dbReference type="OrthoDB" id="293868at2759"/>
<dbReference type="PAN-GO" id="Q96D15">
    <property type="GO annotations" value="2 GO annotations based on evolutionary models"/>
</dbReference>
<dbReference type="PhylomeDB" id="Q96D15"/>
<dbReference type="TreeFam" id="TF314849"/>
<dbReference type="PathwayCommons" id="Q96D15"/>
<dbReference type="SignaLink" id="Q96D15"/>
<dbReference type="BioGRID-ORCS" id="57333">
    <property type="hits" value="12 hits in 1157 CRISPR screens"/>
</dbReference>
<dbReference type="ChiTaRS" id="RCN3">
    <property type="organism name" value="human"/>
</dbReference>
<dbReference type="GenomeRNAi" id="57333"/>
<dbReference type="Pharos" id="Q96D15">
    <property type="development level" value="Tbio"/>
</dbReference>
<dbReference type="PRO" id="PR:Q96D15"/>
<dbReference type="Proteomes" id="UP000005640">
    <property type="component" value="Chromosome 19"/>
</dbReference>
<dbReference type="RNAct" id="Q96D15">
    <property type="molecule type" value="protein"/>
</dbReference>
<dbReference type="Bgee" id="ENSG00000142552">
    <property type="expression patterns" value="Expressed in stromal cell of endometrium and 176 other cell types or tissues"/>
</dbReference>
<dbReference type="ExpressionAtlas" id="Q96D15">
    <property type="expression patterns" value="baseline and differential"/>
</dbReference>
<dbReference type="GO" id="GO:0005783">
    <property type="term" value="C:endoplasmic reticulum"/>
    <property type="evidence" value="ECO:0000314"/>
    <property type="project" value="UniProtKB"/>
</dbReference>
<dbReference type="GO" id="GO:0005788">
    <property type="term" value="C:endoplasmic reticulum lumen"/>
    <property type="evidence" value="ECO:0007669"/>
    <property type="project" value="UniProtKB-SubCell"/>
</dbReference>
<dbReference type="GO" id="GO:0043231">
    <property type="term" value="C:intracellular membrane-bounded organelle"/>
    <property type="evidence" value="ECO:0000314"/>
    <property type="project" value="HPA"/>
</dbReference>
<dbReference type="GO" id="GO:0005509">
    <property type="term" value="F:calcium ion binding"/>
    <property type="evidence" value="ECO:0000314"/>
    <property type="project" value="UniProtKB"/>
</dbReference>
<dbReference type="GO" id="GO:0032964">
    <property type="term" value="P:collagen biosynthetic process"/>
    <property type="evidence" value="ECO:0000315"/>
    <property type="project" value="UniProtKB"/>
</dbReference>
<dbReference type="GO" id="GO:0036503">
    <property type="term" value="P:ERAD pathway"/>
    <property type="evidence" value="ECO:0000250"/>
    <property type="project" value="UniProtKB"/>
</dbReference>
<dbReference type="GO" id="GO:0060428">
    <property type="term" value="P:lung epithelium development"/>
    <property type="evidence" value="ECO:0000250"/>
    <property type="project" value="UniProtKB"/>
</dbReference>
<dbReference type="GO" id="GO:0055091">
    <property type="term" value="P:phospholipid homeostasis"/>
    <property type="evidence" value="ECO:0000250"/>
    <property type="project" value="UniProtKB"/>
</dbReference>
<dbReference type="GO" id="GO:0010952">
    <property type="term" value="P:positive regulation of peptidase activity"/>
    <property type="evidence" value="ECO:0000315"/>
    <property type="project" value="UniProtKB"/>
</dbReference>
<dbReference type="GO" id="GO:0009306">
    <property type="term" value="P:protein secretion"/>
    <property type="evidence" value="ECO:0000315"/>
    <property type="project" value="UniProtKB"/>
</dbReference>
<dbReference type="GO" id="GO:0015031">
    <property type="term" value="P:protein transport"/>
    <property type="evidence" value="ECO:0000250"/>
    <property type="project" value="UniProtKB"/>
</dbReference>
<dbReference type="GO" id="GO:0051896">
    <property type="term" value="P:regulation of phosphatidylinositol 3-kinase/protein kinase B signal transduction"/>
    <property type="evidence" value="ECO:0000315"/>
    <property type="project" value="UniProtKB"/>
</dbReference>
<dbReference type="GO" id="GO:0043129">
    <property type="term" value="P:surfactant homeostasis"/>
    <property type="evidence" value="ECO:0000250"/>
    <property type="project" value="UniProtKB"/>
</dbReference>
<dbReference type="CDD" id="cd16230">
    <property type="entry name" value="EFh_CREC_RCN3"/>
    <property type="match status" value="1"/>
</dbReference>
<dbReference type="FunFam" id="1.10.238.10:FF:000104">
    <property type="entry name" value="calumenin isoform X1"/>
    <property type="match status" value="1"/>
</dbReference>
<dbReference type="Gene3D" id="1.10.238.10">
    <property type="entry name" value="EF-hand"/>
    <property type="match status" value="2"/>
</dbReference>
<dbReference type="InterPro" id="IPR011992">
    <property type="entry name" value="EF-hand-dom_pair"/>
</dbReference>
<dbReference type="InterPro" id="IPR018247">
    <property type="entry name" value="EF_Hand_1_Ca_BS"/>
</dbReference>
<dbReference type="InterPro" id="IPR002048">
    <property type="entry name" value="EF_hand_dom"/>
</dbReference>
<dbReference type="PANTHER" id="PTHR10827">
    <property type="entry name" value="RETICULOCALBIN"/>
    <property type="match status" value="1"/>
</dbReference>
<dbReference type="PANTHER" id="PTHR10827:SF47">
    <property type="entry name" value="RETICULOCALBIN-3"/>
    <property type="match status" value="1"/>
</dbReference>
<dbReference type="Pfam" id="PF13202">
    <property type="entry name" value="EF-hand_5"/>
    <property type="match status" value="1"/>
</dbReference>
<dbReference type="Pfam" id="PF13499">
    <property type="entry name" value="EF-hand_7"/>
    <property type="match status" value="1"/>
</dbReference>
<dbReference type="SMART" id="SM00054">
    <property type="entry name" value="EFh"/>
    <property type="match status" value="3"/>
</dbReference>
<dbReference type="SUPFAM" id="SSF47473">
    <property type="entry name" value="EF-hand"/>
    <property type="match status" value="2"/>
</dbReference>
<dbReference type="PROSITE" id="PS00018">
    <property type="entry name" value="EF_HAND_1"/>
    <property type="match status" value="4"/>
</dbReference>
<dbReference type="PROSITE" id="PS50222">
    <property type="entry name" value="EF_HAND_2"/>
    <property type="match status" value="6"/>
</dbReference>
<dbReference type="PROSITE" id="PS00014">
    <property type="entry name" value="ER_TARGET"/>
    <property type="match status" value="1"/>
</dbReference>
<name>RCN3_HUMAN</name>
<organism>
    <name type="scientific">Homo sapiens</name>
    <name type="common">Human</name>
    <dbReference type="NCBI Taxonomy" id="9606"/>
    <lineage>
        <taxon>Eukaryota</taxon>
        <taxon>Metazoa</taxon>
        <taxon>Chordata</taxon>
        <taxon>Craniata</taxon>
        <taxon>Vertebrata</taxon>
        <taxon>Euteleostomi</taxon>
        <taxon>Mammalia</taxon>
        <taxon>Eutheria</taxon>
        <taxon>Euarchontoglires</taxon>
        <taxon>Primates</taxon>
        <taxon>Haplorrhini</taxon>
        <taxon>Catarrhini</taxon>
        <taxon>Hominidae</taxon>
        <taxon>Homo</taxon>
    </lineage>
</organism>
<gene>
    <name evidence="12" type="primary">RCN3</name>
    <name evidence="11" type="ORF">UNQ239/PRO272</name>
</gene>
<accession>Q96D15</accession>
<accession>Q9HBZ8</accession>
<comment type="function">
    <text evidence="2 7 9">Probable molecular chaperone assisting protein biosynthesis and transport in the endoplasmic reticulum (PubMed:16433634, PubMed:28939891). Required for the proper biosynthesis and transport of pulmonary surfactant-associated protein A/SP-A, pulmonary surfactant-associated protein D/SP-D and the lipid transporter ABCA3 (By similarity). By regulating both the proper expression and the degradation through the endoplasmic reticulum-associated protein degradation pathway of these proteins plays a crucial role in pulmonary surfactant homeostasis (By similarity). Has an anti-fibrotic activity by negatively regulating the secretion of type I and type III collagens (PubMed:28939891). This calcium-binding protein also transiently associates with immature PCSK6 and regulates its secretion (PubMed:16433634).</text>
</comment>
<comment type="subunit">
    <text evidence="7">Interacts with PCSK6 (immature form including the propeptide); probably involved in the maturation and the secretion of PCSK6.</text>
</comment>
<comment type="interaction">
    <interactant intactId="EBI-746283">
        <id>Q96D15</id>
    </interactant>
    <interactant intactId="EBI-10261970">
        <id>Q8IW40</id>
        <label>CCDC103</label>
    </interactant>
    <organismsDiffer>false</organismsDiffer>
    <experiments>3</experiments>
</comment>
<comment type="interaction">
    <interactant intactId="EBI-746283">
        <id>Q96D15</id>
    </interactant>
    <interactant intactId="EBI-1783068">
        <id>O95983</id>
        <label>MBD3</label>
    </interactant>
    <organismsDiffer>false</organismsDiffer>
    <experiments>3</experiments>
</comment>
<comment type="interaction">
    <interactant intactId="EBI-746283">
        <id>Q96D15</id>
    </interactant>
    <interactant intactId="EBI-11978579">
        <id>O95983-2</id>
        <label>MBD3</label>
    </interactant>
    <organismsDiffer>false</organismsDiffer>
    <experiments>3</experiments>
</comment>
<comment type="interaction">
    <interactant intactId="EBI-746283">
        <id>Q96D15</id>
    </interactant>
    <interactant intactId="EBI-7950783">
        <id>Q96JP2</id>
        <label>MYO15B</label>
    </interactant>
    <organismsDiffer>false</organismsDiffer>
    <experiments>3</experiments>
</comment>
<comment type="interaction">
    <interactant intactId="EBI-746283">
        <id>Q96D15</id>
    </interactant>
    <interactant intactId="EBI-747693">
        <id>P41227</id>
        <label>NAA10</label>
    </interactant>
    <organismsDiffer>false</organismsDiffer>
    <experiments>3</experiments>
</comment>
<comment type="interaction">
    <interactant intactId="EBI-746283">
        <id>Q96D15</id>
    </interactant>
    <interactant intactId="EBI-3925298">
        <id>Q8N7B6</id>
        <label>PACRGL</label>
    </interactant>
    <organismsDiffer>false</organismsDiffer>
    <experiments>3</experiments>
</comment>
<comment type="interaction">
    <interactant intactId="EBI-746283">
        <id>Q96D15</id>
    </interactant>
    <interactant intactId="EBI-740595">
        <id>Q9UMX1</id>
        <label>SUFU</label>
    </interactant>
    <organismsDiffer>false</organismsDiffer>
    <experiments>5</experiments>
</comment>
<comment type="interaction">
    <interactant intactId="EBI-746283">
        <id>Q96D15</id>
    </interactant>
    <interactant intactId="EBI-740727">
        <id>Q8TAU3</id>
        <label>ZNF417</label>
    </interactant>
    <organismsDiffer>false</organismsDiffer>
    <experiments>3</experiments>
</comment>
<comment type="subcellular location">
    <subcellularLocation>
        <location evidence="7">Endoplasmic reticulum lumen</location>
    </subcellularLocation>
</comment>
<comment type="tissue specificity">
    <text evidence="7">Widely expressed.</text>
</comment>
<comment type="induction">
    <text evidence="9">Down-regulated by aldosterone (at protein level). No effect at the transcript level.</text>
</comment>
<comment type="PTM">
    <text evidence="7">Degraded by PCSK6 and other endoproteases including FURIN and PCSK5.</text>
</comment>
<comment type="PTM">
    <text evidence="1">N-glycosylated.</text>
</comment>
<comment type="similarity">
    <text evidence="10">Belongs to the CREC family.</text>
</comment>
<proteinExistence type="evidence at protein level"/>
<sequence length="328" mass="37493">MMWRPSVLLLLLLLRHGAQGKPSPDAGPHGQGRVHQAAPLSDAPHDDAHGNFQYDHEAFLGREVAKEFDQLTPEESQARLGRIVDRMDRAGDGDGWVSLAELRAWIAHTQQRHIRDSVSAAWDTYDTDRDGRVGWEELRNATYGHYAPGEEFHDVEDAETYKKMLARDERRFRVADQDGDSMATREELTAFLHPEEFPHMRDIVIAETLEDLDRNKDGYVQVEEYIADLYSAEPGEEEPAWVQTERQQFRDFRDLNKDGHLDGSEVGHWVLPPAQDQPLVEANHLLHESDTDKDGRLSKAEILGNWNMFVGSQATNYGEDLTRHHDEL</sequence>
<reference key="1">
    <citation type="submission" date="2002-12" db="EMBL/GenBank/DDBJ databases">
        <authorList>
            <person name="Liu F."/>
            <person name="Zeng L.-C."/>
            <person name="Rong Y.-P."/>
            <person name="Qi X.-F."/>
            <person name="Ma W.-J."/>
            <person name="Han Z.-G."/>
        </authorList>
    </citation>
    <scope>NUCLEOTIDE SEQUENCE [MRNA]</scope>
</reference>
<reference key="2">
    <citation type="journal article" date="2000" name="Proc. Natl. Acad. Sci. U.S.A.">
        <title>Gene expression profiling in the human hypothalamus-pituitary-adrenal axis and full-length cDNA cloning.</title>
        <authorList>
            <person name="Hu R.-M."/>
            <person name="Han Z.-G."/>
            <person name="Song H.-D."/>
            <person name="Peng Y.-D."/>
            <person name="Huang Q.-H."/>
            <person name="Ren S.-X."/>
            <person name="Gu Y.-J."/>
            <person name="Huang C.-H."/>
            <person name="Li Y.-B."/>
            <person name="Jiang C.-L."/>
            <person name="Fu G."/>
            <person name="Zhang Q.-H."/>
            <person name="Gu B.-W."/>
            <person name="Dai M."/>
            <person name="Mao Y.-F."/>
            <person name="Gao G.-F."/>
            <person name="Rong R."/>
            <person name="Ye M."/>
            <person name="Zhou J."/>
            <person name="Xu S.-H."/>
            <person name="Gu J."/>
            <person name="Shi J.-X."/>
            <person name="Jin W.-R."/>
            <person name="Zhang C.-K."/>
            <person name="Wu T.-M."/>
            <person name="Huang G.-Y."/>
            <person name="Chen Z."/>
            <person name="Chen M.-D."/>
            <person name="Chen J.-L."/>
        </authorList>
    </citation>
    <scope>NUCLEOTIDE SEQUENCE [LARGE SCALE MRNA]</scope>
    <source>
        <tissue>Hypothalamus</tissue>
    </source>
</reference>
<reference key="3">
    <citation type="journal article" date="2003" name="Genome Res.">
        <title>The secreted protein discovery initiative (SPDI), a large-scale effort to identify novel human secreted and transmembrane proteins: a bioinformatics assessment.</title>
        <authorList>
            <person name="Clark H.F."/>
            <person name="Gurney A.L."/>
            <person name="Abaya E."/>
            <person name="Baker K."/>
            <person name="Baldwin D.T."/>
            <person name="Brush J."/>
            <person name="Chen J."/>
            <person name="Chow B."/>
            <person name="Chui C."/>
            <person name="Crowley C."/>
            <person name="Currell B."/>
            <person name="Deuel B."/>
            <person name="Dowd P."/>
            <person name="Eaton D."/>
            <person name="Foster J.S."/>
            <person name="Grimaldi C."/>
            <person name="Gu Q."/>
            <person name="Hass P.E."/>
            <person name="Heldens S."/>
            <person name="Huang A."/>
            <person name="Kim H.S."/>
            <person name="Klimowski L."/>
            <person name="Jin Y."/>
            <person name="Johnson S."/>
            <person name="Lee J."/>
            <person name="Lewis L."/>
            <person name="Liao D."/>
            <person name="Mark M.R."/>
            <person name="Robbie E."/>
            <person name="Sanchez C."/>
            <person name="Schoenfeld J."/>
            <person name="Seshagiri S."/>
            <person name="Simmons L."/>
            <person name="Singh J."/>
            <person name="Smith V."/>
            <person name="Stinson J."/>
            <person name="Vagts A."/>
            <person name="Vandlen R.L."/>
            <person name="Watanabe C."/>
            <person name="Wieand D."/>
            <person name="Woods K."/>
            <person name="Xie M.-H."/>
            <person name="Yansura D.G."/>
            <person name="Yi S."/>
            <person name="Yu G."/>
            <person name="Yuan J."/>
            <person name="Zhang M."/>
            <person name="Zhang Z."/>
            <person name="Goddard A.D."/>
            <person name="Wood W.I."/>
            <person name="Godowski P.J."/>
            <person name="Gray A.M."/>
        </authorList>
    </citation>
    <scope>NUCLEOTIDE SEQUENCE [LARGE SCALE MRNA]</scope>
</reference>
<reference key="4">
    <citation type="journal article" date="2004" name="Genome Res.">
        <title>The status, quality, and expansion of the NIH full-length cDNA project: the Mammalian Gene Collection (MGC).</title>
        <authorList>
            <consortium name="The MGC Project Team"/>
        </authorList>
    </citation>
    <scope>NUCLEOTIDE SEQUENCE [LARGE SCALE MRNA]</scope>
    <source>
        <tissue>Lung</tissue>
    </source>
</reference>
<reference key="5">
    <citation type="journal article" date="2009" name="J. Proteome Res.">
        <title>Glycoproteomics analysis of human liver tissue by combination of multiple enzyme digestion and hydrazide chemistry.</title>
        <authorList>
            <person name="Chen R."/>
            <person name="Jiang X."/>
            <person name="Sun D."/>
            <person name="Han G."/>
            <person name="Wang F."/>
            <person name="Ye M."/>
            <person name="Wang L."/>
            <person name="Zou H."/>
        </authorList>
    </citation>
    <scope>GLYCOSYLATION [LARGE SCALE ANALYSIS] AT ASN-140</scope>
    <source>
        <tissue>Liver</tissue>
    </source>
</reference>
<reference key="6">
    <citation type="journal article" date="2011" name="BMC Syst. Biol.">
        <title>Initial characterization of the human central proteome.</title>
        <authorList>
            <person name="Burkard T.R."/>
            <person name="Planyavsky M."/>
            <person name="Kaupe I."/>
            <person name="Breitwieser F.P."/>
            <person name="Buerckstuemmer T."/>
            <person name="Bennett K.L."/>
            <person name="Superti-Furga G."/>
            <person name="Colinge J."/>
        </authorList>
    </citation>
    <scope>IDENTIFICATION BY MASS SPECTROMETRY [LARGE SCALE ANALYSIS]</scope>
</reference>
<reference key="7">
    <citation type="journal article" date="2006" name="Biochem. J.">
        <title>A proteomic approach reveals transient association of reticulocalbin-3, a novel member of the CREC family, with the precursor of subtilisin-like proprotein convertase, PACE4.</title>
        <authorList>
            <person name="Tsuji A."/>
            <person name="Kikuchi Y."/>
            <person name="Sato Y."/>
            <person name="Koide S."/>
            <person name="Yuasa K."/>
            <person name="Nagahama M."/>
            <person name="Matsuda Y."/>
        </authorList>
    </citation>
    <scope>FUNCTION</scope>
    <scope>CALCIUM-BINDING</scope>
    <scope>INTERACTION WITH PCSK6</scope>
    <scope>SUBCELLULAR LOCATION</scope>
    <scope>TISSUE SPECIFICITY</scope>
    <scope>PROTEOLYTIC CLEAVAGE</scope>
    <scope>MUTAGENESIS OF ARG-86; ARG-112 AND 325-HIS--LEU-328</scope>
</reference>
<reference key="8">
    <citation type="journal article" date="2017" name="Sci. Rep.">
        <title>Differential Proteomics Identifies Reticulocalbin-3 as a Novel Negative Mediator of Collagen Production in Human Cardiac Fibroblasts.</title>
        <authorList>
            <person name="Martinez-Martinez E."/>
            <person name="Ibarrola J."/>
            <person name="Fernandez-Celis A."/>
            <person name="Santamaria E."/>
            <person name="Fernandez-Irigoyen J."/>
            <person name="Rossignol P."/>
            <person name="Jaisser F."/>
            <person name="Lopez-Andres N."/>
        </authorList>
    </citation>
    <scope>FUNCTION</scope>
    <scope>INDUCTION BY ALDOSTERONE</scope>
</reference>